<accession>P0DA16</accession>
<accession>Q8K665</accession>
<sequence length="508" mass="56067">MSQEKYIMAIDQGTTSSRAIIFNQKGEKVSSSQKEFPQIFPHAGWVEHNANQIWNSVQSVIAGAFIESSIKPSQIEAIGITNQRETTVIWDKKTGVPIYNAIVWQSRQTAPIAEQLKQDGHTKMIHEKTGLVIDAYFSATKIRWILDHVPGAQERAEKGELLFGTIDTWLVWKLTDGAVHVTDYSNAARTMLYNIKDLTWDDEILELLNIPKDMLPEVKSNSEIYGKTAAFHFYGGEVPISGMAGDQQAALFGQLAFEPGMVKNTYGTGSFIIMNTGDEMQLSSNNLLTTIGYGINGKVHYALEGSIFIAGSAIQWLRDGLKMIETSPESEQFALASTSDDEVYVVPAFTGLGAPYWDSNARGSVFGLTRGTSKEDFVKATLQSIAYQVRDVIDTMQVDSGIDIQQLRVDGGAAMNNMLMQFQADILGIDIARAKNLETTALGAAFLAGLAVGYWEDMDALKELNATGQLFKASMNESRKEKLYKGWKRAVKATQVFTQEEDADDDAK</sequence>
<name>GLPK_STRP3</name>
<dbReference type="EC" id="2.7.1.30" evidence="1"/>
<dbReference type="EMBL" id="AE014074">
    <property type="protein sequence ID" value="AAM80075.1"/>
    <property type="molecule type" value="Genomic_DNA"/>
</dbReference>
<dbReference type="RefSeq" id="WP_011054909.1">
    <property type="nucleotide sequence ID" value="NC_004070.1"/>
</dbReference>
<dbReference type="SMR" id="P0DA16"/>
<dbReference type="KEGG" id="spg:SpyM3_1468"/>
<dbReference type="HOGENOM" id="CLU_009281_2_3_9"/>
<dbReference type="UniPathway" id="UPA00618">
    <property type="reaction ID" value="UER00672"/>
</dbReference>
<dbReference type="Proteomes" id="UP000000564">
    <property type="component" value="Chromosome"/>
</dbReference>
<dbReference type="GO" id="GO:0005829">
    <property type="term" value="C:cytosol"/>
    <property type="evidence" value="ECO:0007669"/>
    <property type="project" value="TreeGrafter"/>
</dbReference>
<dbReference type="GO" id="GO:0005524">
    <property type="term" value="F:ATP binding"/>
    <property type="evidence" value="ECO:0007669"/>
    <property type="project" value="UniProtKB-UniRule"/>
</dbReference>
<dbReference type="GO" id="GO:0004370">
    <property type="term" value="F:glycerol kinase activity"/>
    <property type="evidence" value="ECO:0000250"/>
    <property type="project" value="UniProtKB"/>
</dbReference>
<dbReference type="GO" id="GO:0019563">
    <property type="term" value="P:glycerol catabolic process"/>
    <property type="evidence" value="ECO:0007669"/>
    <property type="project" value="UniProtKB-UniRule"/>
</dbReference>
<dbReference type="GO" id="GO:0006071">
    <property type="term" value="P:glycerol metabolic process"/>
    <property type="evidence" value="ECO:0000250"/>
    <property type="project" value="UniProtKB"/>
</dbReference>
<dbReference type="GO" id="GO:0006072">
    <property type="term" value="P:glycerol-3-phosphate metabolic process"/>
    <property type="evidence" value="ECO:0007669"/>
    <property type="project" value="InterPro"/>
</dbReference>
<dbReference type="CDD" id="cd07786">
    <property type="entry name" value="FGGY_EcGK_like"/>
    <property type="match status" value="1"/>
</dbReference>
<dbReference type="FunFam" id="3.30.420.40:FF:000007">
    <property type="entry name" value="Glycerol kinase"/>
    <property type="match status" value="1"/>
</dbReference>
<dbReference type="FunFam" id="3.30.420.40:FF:000008">
    <property type="entry name" value="Glycerol kinase"/>
    <property type="match status" value="1"/>
</dbReference>
<dbReference type="Gene3D" id="3.30.420.40">
    <property type="match status" value="2"/>
</dbReference>
<dbReference type="HAMAP" id="MF_00186">
    <property type="entry name" value="Glycerol_kin"/>
    <property type="match status" value="1"/>
</dbReference>
<dbReference type="InterPro" id="IPR043129">
    <property type="entry name" value="ATPase_NBD"/>
</dbReference>
<dbReference type="InterPro" id="IPR000577">
    <property type="entry name" value="Carb_kinase_FGGY"/>
</dbReference>
<dbReference type="InterPro" id="IPR018483">
    <property type="entry name" value="Carb_kinase_FGGY_CS"/>
</dbReference>
<dbReference type="InterPro" id="IPR018485">
    <property type="entry name" value="FGGY_C"/>
</dbReference>
<dbReference type="InterPro" id="IPR018484">
    <property type="entry name" value="FGGY_N"/>
</dbReference>
<dbReference type="InterPro" id="IPR005999">
    <property type="entry name" value="Glycerol_kin"/>
</dbReference>
<dbReference type="NCBIfam" id="TIGR01311">
    <property type="entry name" value="glycerol_kin"/>
    <property type="match status" value="1"/>
</dbReference>
<dbReference type="NCBIfam" id="NF000756">
    <property type="entry name" value="PRK00047.1"/>
    <property type="match status" value="1"/>
</dbReference>
<dbReference type="PANTHER" id="PTHR10196:SF69">
    <property type="entry name" value="GLYCEROL KINASE"/>
    <property type="match status" value="1"/>
</dbReference>
<dbReference type="PANTHER" id="PTHR10196">
    <property type="entry name" value="SUGAR KINASE"/>
    <property type="match status" value="1"/>
</dbReference>
<dbReference type="Pfam" id="PF02782">
    <property type="entry name" value="FGGY_C"/>
    <property type="match status" value="1"/>
</dbReference>
<dbReference type="Pfam" id="PF00370">
    <property type="entry name" value="FGGY_N"/>
    <property type="match status" value="1"/>
</dbReference>
<dbReference type="PIRSF" id="PIRSF000538">
    <property type="entry name" value="GlpK"/>
    <property type="match status" value="1"/>
</dbReference>
<dbReference type="SUPFAM" id="SSF53067">
    <property type="entry name" value="Actin-like ATPase domain"/>
    <property type="match status" value="2"/>
</dbReference>
<dbReference type="PROSITE" id="PS00933">
    <property type="entry name" value="FGGY_KINASES_1"/>
    <property type="match status" value="1"/>
</dbReference>
<dbReference type="PROSITE" id="PS00445">
    <property type="entry name" value="FGGY_KINASES_2"/>
    <property type="match status" value="1"/>
</dbReference>
<reference key="1">
    <citation type="journal article" date="2002" name="Proc. Natl. Acad. Sci. U.S.A.">
        <title>Genome sequence of a serotype M3 strain of group A Streptococcus: phage-encoded toxins, the high-virulence phenotype, and clone emergence.</title>
        <authorList>
            <person name="Beres S.B."/>
            <person name="Sylva G.L."/>
            <person name="Barbian K.D."/>
            <person name="Lei B."/>
            <person name="Hoff J.S."/>
            <person name="Mammarella N.D."/>
            <person name="Liu M.-Y."/>
            <person name="Smoot J.C."/>
            <person name="Porcella S.F."/>
            <person name="Parkins L.D."/>
            <person name="Campbell D.S."/>
            <person name="Smith T.M."/>
            <person name="McCormick J.K."/>
            <person name="Leung D.Y.M."/>
            <person name="Schlievert P.M."/>
            <person name="Musser J.M."/>
        </authorList>
    </citation>
    <scope>NUCLEOTIDE SEQUENCE [LARGE SCALE GENOMIC DNA]</scope>
    <source>
        <strain>ATCC BAA-595 / MGAS315</strain>
    </source>
</reference>
<feature type="chain" id="PRO_0000059508" description="Glycerol kinase">
    <location>
        <begin position="1"/>
        <end position="508"/>
    </location>
</feature>
<feature type="binding site" evidence="1">
    <location>
        <position position="14"/>
    </location>
    <ligand>
        <name>ADP</name>
        <dbReference type="ChEBI" id="CHEBI:456216"/>
    </ligand>
</feature>
<feature type="binding site" evidence="1">
    <location>
        <position position="14"/>
    </location>
    <ligand>
        <name>ATP</name>
        <dbReference type="ChEBI" id="CHEBI:30616"/>
    </ligand>
</feature>
<feature type="binding site" evidence="1">
    <location>
        <position position="14"/>
    </location>
    <ligand>
        <name>sn-glycerol 3-phosphate</name>
        <dbReference type="ChEBI" id="CHEBI:57597"/>
    </ligand>
</feature>
<feature type="binding site" evidence="1">
    <location>
        <position position="15"/>
    </location>
    <ligand>
        <name>ATP</name>
        <dbReference type="ChEBI" id="CHEBI:30616"/>
    </ligand>
</feature>
<feature type="binding site" evidence="1">
    <location>
        <position position="16"/>
    </location>
    <ligand>
        <name>ATP</name>
        <dbReference type="ChEBI" id="CHEBI:30616"/>
    </ligand>
</feature>
<feature type="binding site" evidence="1">
    <location>
        <position position="18"/>
    </location>
    <ligand>
        <name>ADP</name>
        <dbReference type="ChEBI" id="CHEBI:456216"/>
    </ligand>
</feature>
<feature type="binding site" evidence="1">
    <location>
        <position position="84"/>
    </location>
    <ligand>
        <name>glycerol</name>
        <dbReference type="ChEBI" id="CHEBI:17754"/>
    </ligand>
</feature>
<feature type="binding site" evidence="1">
    <location>
        <position position="84"/>
    </location>
    <ligand>
        <name>sn-glycerol 3-phosphate</name>
        <dbReference type="ChEBI" id="CHEBI:57597"/>
    </ligand>
</feature>
<feature type="binding site" evidence="1">
    <location>
        <position position="85"/>
    </location>
    <ligand>
        <name>glycerol</name>
        <dbReference type="ChEBI" id="CHEBI:17754"/>
    </ligand>
</feature>
<feature type="binding site" evidence="1">
    <location>
        <position position="85"/>
    </location>
    <ligand>
        <name>sn-glycerol 3-phosphate</name>
        <dbReference type="ChEBI" id="CHEBI:57597"/>
    </ligand>
</feature>
<feature type="binding site" evidence="1">
    <location>
        <position position="136"/>
    </location>
    <ligand>
        <name>glycerol</name>
        <dbReference type="ChEBI" id="CHEBI:17754"/>
    </ligand>
</feature>
<feature type="binding site" evidence="1">
    <location>
        <position position="136"/>
    </location>
    <ligand>
        <name>sn-glycerol 3-phosphate</name>
        <dbReference type="ChEBI" id="CHEBI:57597"/>
    </ligand>
</feature>
<feature type="binding site" evidence="1">
    <location>
        <position position="246"/>
    </location>
    <ligand>
        <name>glycerol</name>
        <dbReference type="ChEBI" id="CHEBI:17754"/>
    </ligand>
</feature>
<feature type="binding site" evidence="1">
    <location>
        <position position="246"/>
    </location>
    <ligand>
        <name>sn-glycerol 3-phosphate</name>
        <dbReference type="ChEBI" id="CHEBI:57597"/>
    </ligand>
</feature>
<feature type="binding site" evidence="1">
    <location>
        <position position="247"/>
    </location>
    <ligand>
        <name>glycerol</name>
        <dbReference type="ChEBI" id="CHEBI:17754"/>
    </ligand>
</feature>
<feature type="binding site" evidence="1">
    <location>
        <position position="268"/>
    </location>
    <ligand>
        <name>ADP</name>
        <dbReference type="ChEBI" id="CHEBI:456216"/>
    </ligand>
</feature>
<feature type="binding site" evidence="1">
    <location>
        <position position="268"/>
    </location>
    <ligand>
        <name>ATP</name>
        <dbReference type="ChEBI" id="CHEBI:30616"/>
    </ligand>
</feature>
<feature type="binding site" evidence="1">
    <location>
        <position position="311"/>
    </location>
    <ligand>
        <name>ADP</name>
        <dbReference type="ChEBI" id="CHEBI:456216"/>
    </ligand>
</feature>
<feature type="binding site" evidence="1">
    <location>
        <position position="311"/>
    </location>
    <ligand>
        <name>ATP</name>
        <dbReference type="ChEBI" id="CHEBI:30616"/>
    </ligand>
</feature>
<feature type="binding site" evidence="1">
    <location>
        <position position="315"/>
    </location>
    <ligand>
        <name>ATP</name>
        <dbReference type="ChEBI" id="CHEBI:30616"/>
    </ligand>
</feature>
<feature type="binding site" evidence="1">
    <location>
        <position position="412"/>
    </location>
    <ligand>
        <name>ADP</name>
        <dbReference type="ChEBI" id="CHEBI:456216"/>
    </ligand>
</feature>
<feature type="binding site" evidence="1">
    <location>
        <position position="412"/>
    </location>
    <ligand>
        <name>ATP</name>
        <dbReference type="ChEBI" id="CHEBI:30616"/>
    </ligand>
</feature>
<feature type="binding site" evidence="1">
    <location>
        <position position="416"/>
    </location>
    <ligand>
        <name>ADP</name>
        <dbReference type="ChEBI" id="CHEBI:456216"/>
    </ligand>
</feature>
<feature type="modified residue" description="Phosphohistidine; by HPr" evidence="1">
    <location>
        <position position="232"/>
    </location>
</feature>
<organism>
    <name type="scientific">Streptococcus pyogenes serotype M3 (strain ATCC BAA-595 / MGAS315)</name>
    <dbReference type="NCBI Taxonomy" id="198466"/>
    <lineage>
        <taxon>Bacteria</taxon>
        <taxon>Bacillati</taxon>
        <taxon>Bacillota</taxon>
        <taxon>Bacilli</taxon>
        <taxon>Lactobacillales</taxon>
        <taxon>Streptococcaceae</taxon>
        <taxon>Streptococcus</taxon>
    </lineage>
</organism>
<comment type="function">
    <text evidence="1">Key enzyme in the regulation of glycerol uptake and metabolism. Catalyzes the phosphorylation of glycerol to yield sn-glycerol 3-phosphate.</text>
</comment>
<comment type="catalytic activity">
    <reaction evidence="1">
        <text>glycerol + ATP = sn-glycerol 3-phosphate + ADP + H(+)</text>
        <dbReference type="Rhea" id="RHEA:21644"/>
        <dbReference type="ChEBI" id="CHEBI:15378"/>
        <dbReference type="ChEBI" id="CHEBI:17754"/>
        <dbReference type="ChEBI" id="CHEBI:30616"/>
        <dbReference type="ChEBI" id="CHEBI:57597"/>
        <dbReference type="ChEBI" id="CHEBI:456216"/>
        <dbReference type="EC" id="2.7.1.30"/>
    </reaction>
</comment>
<comment type="activity regulation">
    <text evidence="1">Activated by phosphorylation and inhibited by fructose 1,6-bisphosphate (FBP).</text>
</comment>
<comment type="pathway">
    <text evidence="1">Polyol metabolism; glycerol degradation via glycerol kinase pathway; sn-glycerol 3-phosphate from glycerol: step 1/1.</text>
</comment>
<comment type="subunit">
    <text evidence="1">Homotetramer and homodimer (in equilibrium).</text>
</comment>
<comment type="PTM">
    <text evidence="1">The phosphoenolpyruvate-dependent sugar phosphotransferase system (PTS), including enzyme I, and histidine-containing protein (HPr) are required for the phosphorylation, which leads to the activation of the enzyme.</text>
</comment>
<comment type="similarity">
    <text evidence="1">Belongs to the FGGY kinase family.</text>
</comment>
<gene>
    <name evidence="1" type="primary">glpK</name>
    <name type="ordered locus">SpyM3_1468</name>
</gene>
<protein>
    <recommendedName>
        <fullName evidence="1">Glycerol kinase</fullName>
        <ecNumber evidence="1">2.7.1.30</ecNumber>
    </recommendedName>
    <alternativeName>
        <fullName evidence="1">ATP:glycerol 3-phosphotransferase</fullName>
    </alternativeName>
    <alternativeName>
        <fullName evidence="1">Glycerokinase</fullName>
        <shortName evidence="1">GK</shortName>
    </alternativeName>
</protein>
<proteinExistence type="inferred from homology"/>
<keyword id="KW-0067">ATP-binding</keyword>
<keyword id="KW-0319">Glycerol metabolism</keyword>
<keyword id="KW-0418">Kinase</keyword>
<keyword id="KW-0547">Nucleotide-binding</keyword>
<keyword id="KW-0597">Phosphoprotein</keyword>
<keyword id="KW-0808">Transferase</keyword>
<evidence type="ECO:0000255" key="1">
    <source>
        <dbReference type="HAMAP-Rule" id="MF_00186"/>
    </source>
</evidence>